<accession>B4SE58</accession>
<name>END4_PELPB</name>
<organism>
    <name type="scientific">Pelodictyon phaeoclathratiforme (strain DSM 5477 / BU-1)</name>
    <dbReference type="NCBI Taxonomy" id="324925"/>
    <lineage>
        <taxon>Bacteria</taxon>
        <taxon>Pseudomonadati</taxon>
        <taxon>Chlorobiota</taxon>
        <taxon>Chlorobiia</taxon>
        <taxon>Chlorobiales</taxon>
        <taxon>Chlorobiaceae</taxon>
        <taxon>Chlorobium/Pelodictyon group</taxon>
        <taxon>Pelodictyon</taxon>
    </lineage>
</organism>
<sequence>MKRVGAHVSTAGGVENAPLQATSIGAKAFALFTKNQRQWKAPKLTTSSIEAFKKNCEAGGFRPEHILPHDSYLINLGSPDPEKLQRAREAFIEEMQRAEELGLLLLNFHPGSHLKEIAEERCLELIAESINRALDATKTVTAVIENTAGQGTNLGNRFEQLAFLVDRIEDKTRVGVCLDTCHLFASGYDLQTTAAIESTFMEFDRIVGLRYLRGMHLNDAMQPLGSRIDRHAGIGKGTIGMDAFRWIMNNPACEEIPLILETPDSAAWSEEISLLYALEQ</sequence>
<dbReference type="EC" id="3.1.21.2" evidence="1"/>
<dbReference type="EMBL" id="CP001110">
    <property type="protein sequence ID" value="ACF44477.1"/>
    <property type="molecule type" value="Genomic_DNA"/>
</dbReference>
<dbReference type="RefSeq" id="WP_012508953.1">
    <property type="nucleotide sequence ID" value="NC_011060.1"/>
</dbReference>
<dbReference type="SMR" id="B4SE58"/>
<dbReference type="STRING" id="324925.Ppha_2282"/>
<dbReference type="KEGG" id="pph:Ppha_2282"/>
<dbReference type="eggNOG" id="COG0648">
    <property type="taxonomic scope" value="Bacteria"/>
</dbReference>
<dbReference type="HOGENOM" id="CLU_025885_0_4_10"/>
<dbReference type="OrthoDB" id="9805666at2"/>
<dbReference type="Proteomes" id="UP000002724">
    <property type="component" value="Chromosome"/>
</dbReference>
<dbReference type="GO" id="GO:0008833">
    <property type="term" value="F:deoxyribonuclease IV (phage-T4-induced) activity"/>
    <property type="evidence" value="ECO:0007669"/>
    <property type="project" value="UniProtKB-UniRule"/>
</dbReference>
<dbReference type="GO" id="GO:0003677">
    <property type="term" value="F:DNA binding"/>
    <property type="evidence" value="ECO:0007669"/>
    <property type="project" value="InterPro"/>
</dbReference>
<dbReference type="GO" id="GO:0003906">
    <property type="term" value="F:DNA-(apurinic or apyrimidinic site) endonuclease activity"/>
    <property type="evidence" value="ECO:0007669"/>
    <property type="project" value="TreeGrafter"/>
</dbReference>
<dbReference type="GO" id="GO:0008081">
    <property type="term" value="F:phosphoric diester hydrolase activity"/>
    <property type="evidence" value="ECO:0007669"/>
    <property type="project" value="TreeGrafter"/>
</dbReference>
<dbReference type="GO" id="GO:0008270">
    <property type="term" value="F:zinc ion binding"/>
    <property type="evidence" value="ECO:0007669"/>
    <property type="project" value="UniProtKB-UniRule"/>
</dbReference>
<dbReference type="GO" id="GO:0006284">
    <property type="term" value="P:base-excision repair"/>
    <property type="evidence" value="ECO:0007669"/>
    <property type="project" value="TreeGrafter"/>
</dbReference>
<dbReference type="CDD" id="cd00019">
    <property type="entry name" value="AP2Ec"/>
    <property type="match status" value="1"/>
</dbReference>
<dbReference type="FunFam" id="3.20.20.150:FF:000001">
    <property type="entry name" value="Probable endonuclease 4"/>
    <property type="match status" value="1"/>
</dbReference>
<dbReference type="Gene3D" id="3.20.20.150">
    <property type="entry name" value="Divalent-metal-dependent TIM barrel enzymes"/>
    <property type="match status" value="1"/>
</dbReference>
<dbReference type="HAMAP" id="MF_00152">
    <property type="entry name" value="Nfo"/>
    <property type="match status" value="1"/>
</dbReference>
<dbReference type="InterPro" id="IPR001719">
    <property type="entry name" value="AP_endonuc_2"/>
</dbReference>
<dbReference type="InterPro" id="IPR018246">
    <property type="entry name" value="AP_endonuc_F2_Zn_BS"/>
</dbReference>
<dbReference type="InterPro" id="IPR036237">
    <property type="entry name" value="Xyl_isomerase-like_sf"/>
</dbReference>
<dbReference type="InterPro" id="IPR013022">
    <property type="entry name" value="Xyl_isomerase-like_TIM-brl"/>
</dbReference>
<dbReference type="NCBIfam" id="TIGR00587">
    <property type="entry name" value="nfo"/>
    <property type="match status" value="1"/>
</dbReference>
<dbReference type="NCBIfam" id="NF002199">
    <property type="entry name" value="PRK01060.1-4"/>
    <property type="match status" value="1"/>
</dbReference>
<dbReference type="PANTHER" id="PTHR21445:SF0">
    <property type="entry name" value="APURINIC-APYRIMIDINIC ENDONUCLEASE"/>
    <property type="match status" value="1"/>
</dbReference>
<dbReference type="PANTHER" id="PTHR21445">
    <property type="entry name" value="ENDONUCLEASE IV ENDODEOXYRIBONUCLEASE IV"/>
    <property type="match status" value="1"/>
</dbReference>
<dbReference type="Pfam" id="PF01261">
    <property type="entry name" value="AP_endonuc_2"/>
    <property type="match status" value="1"/>
</dbReference>
<dbReference type="SMART" id="SM00518">
    <property type="entry name" value="AP2Ec"/>
    <property type="match status" value="1"/>
</dbReference>
<dbReference type="SUPFAM" id="SSF51658">
    <property type="entry name" value="Xylose isomerase-like"/>
    <property type="match status" value="1"/>
</dbReference>
<dbReference type="PROSITE" id="PS00729">
    <property type="entry name" value="AP_NUCLEASE_F2_1"/>
    <property type="match status" value="1"/>
</dbReference>
<dbReference type="PROSITE" id="PS00730">
    <property type="entry name" value="AP_NUCLEASE_F2_2"/>
    <property type="match status" value="1"/>
</dbReference>
<dbReference type="PROSITE" id="PS00731">
    <property type="entry name" value="AP_NUCLEASE_F2_3"/>
    <property type="match status" value="1"/>
</dbReference>
<dbReference type="PROSITE" id="PS51432">
    <property type="entry name" value="AP_NUCLEASE_F2_4"/>
    <property type="match status" value="1"/>
</dbReference>
<keyword id="KW-0227">DNA damage</keyword>
<keyword id="KW-0234">DNA repair</keyword>
<keyword id="KW-0255">Endonuclease</keyword>
<keyword id="KW-0378">Hydrolase</keyword>
<keyword id="KW-0479">Metal-binding</keyword>
<keyword id="KW-0540">Nuclease</keyword>
<keyword id="KW-1185">Reference proteome</keyword>
<keyword id="KW-0862">Zinc</keyword>
<protein>
    <recommendedName>
        <fullName evidence="1">Probable endonuclease 4</fullName>
        <ecNumber evidence="1">3.1.21.2</ecNumber>
    </recommendedName>
    <alternativeName>
        <fullName evidence="1">Endodeoxyribonuclease IV</fullName>
    </alternativeName>
    <alternativeName>
        <fullName evidence="1">Endonuclease IV</fullName>
    </alternativeName>
</protein>
<feature type="chain" id="PRO_1000096895" description="Probable endonuclease 4">
    <location>
        <begin position="1"/>
        <end position="280"/>
    </location>
</feature>
<feature type="binding site" evidence="1">
    <location>
        <position position="69"/>
    </location>
    <ligand>
        <name>Zn(2+)</name>
        <dbReference type="ChEBI" id="CHEBI:29105"/>
        <label>1</label>
    </ligand>
</feature>
<feature type="binding site" evidence="1">
    <location>
        <position position="109"/>
    </location>
    <ligand>
        <name>Zn(2+)</name>
        <dbReference type="ChEBI" id="CHEBI:29105"/>
        <label>1</label>
    </ligand>
</feature>
<feature type="binding site" evidence="1">
    <location>
        <position position="145"/>
    </location>
    <ligand>
        <name>Zn(2+)</name>
        <dbReference type="ChEBI" id="CHEBI:29105"/>
        <label>1</label>
    </ligand>
</feature>
<feature type="binding site" evidence="1">
    <location>
        <position position="145"/>
    </location>
    <ligand>
        <name>Zn(2+)</name>
        <dbReference type="ChEBI" id="CHEBI:29105"/>
        <label>2</label>
    </ligand>
</feature>
<feature type="binding site" evidence="1">
    <location>
        <position position="179"/>
    </location>
    <ligand>
        <name>Zn(2+)</name>
        <dbReference type="ChEBI" id="CHEBI:29105"/>
        <label>2</label>
    </ligand>
</feature>
<feature type="binding site" evidence="1">
    <location>
        <position position="182"/>
    </location>
    <ligand>
        <name>Zn(2+)</name>
        <dbReference type="ChEBI" id="CHEBI:29105"/>
        <label>3</label>
    </ligand>
</feature>
<feature type="binding site" evidence="1">
    <location>
        <position position="216"/>
    </location>
    <ligand>
        <name>Zn(2+)</name>
        <dbReference type="ChEBI" id="CHEBI:29105"/>
        <label>2</label>
    </ligand>
</feature>
<feature type="binding site" evidence="1">
    <location>
        <position position="229"/>
    </location>
    <ligand>
        <name>Zn(2+)</name>
        <dbReference type="ChEBI" id="CHEBI:29105"/>
        <label>3</label>
    </ligand>
</feature>
<feature type="binding site" evidence="1">
    <location>
        <position position="231"/>
    </location>
    <ligand>
        <name>Zn(2+)</name>
        <dbReference type="ChEBI" id="CHEBI:29105"/>
        <label>3</label>
    </ligand>
</feature>
<feature type="binding site" evidence="1">
    <location>
        <position position="261"/>
    </location>
    <ligand>
        <name>Zn(2+)</name>
        <dbReference type="ChEBI" id="CHEBI:29105"/>
        <label>2</label>
    </ligand>
</feature>
<proteinExistence type="inferred from homology"/>
<reference key="1">
    <citation type="submission" date="2008-06" db="EMBL/GenBank/DDBJ databases">
        <title>Complete sequence of Pelodictyon phaeoclathratiforme BU-1.</title>
        <authorList>
            <consortium name="US DOE Joint Genome Institute"/>
            <person name="Lucas S."/>
            <person name="Copeland A."/>
            <person name="Lapidus A."/>
            <person name="Glavina del Rio T."/>
            <person name="Dalin E."/>
            <person name="Tice H."/>
            <person name="Bruce D."/>
            <person name="Goodwin L."/>
            <person name="Pitluck S."/>
            <person name="Schmutz J."/>
            <person name="Larimer F."/>
            <person name="Land M."/>
            <person name="Hauser L."/>
            <person name="Kyrpides N."/>
            <person name="Mikhailova N."/>
            <person name="Liu Z."/>
            <person name="Li T."/>
            <person name="Zhao F."/>
            <person name="Overmann J."/>
            <person name="Bryant D.A."/>
            <person name="Richardson P."/>
        </authorList>
    </citation>
    <scope>NUCLEOTIDE SEQUENCE [LARGE SCALE GENOMIC DNA]</scope>
    <source>
        <strain>DSM 5477 / BU-1</strain>
    </source>
</reference>
<comment type="function">
    <text evidence="1">Endonuclease IV plays a role in DNA repair. It cleaves phosphodiester bonds at apurinic or apyrimidinic (AP) sites, generating a 3'-hydroxyl group and a 5'-terminal sugar phosphate.</text>
</comment>
<comment type="catalytic activity">
    <reaction evidence="1">
        <text>Endonucleolytic cleavage to 5'-phosphooligonucleotide end-products.</text>
        <dbReference type="EC" id="3.1.21.2"/>
    </reaction>
</comment>
<comment type="cofactor">
    <cofactor evidence="1">
        <name>Zn(2+)</name>
        <dbReference type="ChEBI" id="CHEBI:29105"/>
    </cofactor>
    <text evidence="1">Binds 3 Zn(2+) ions.</text>
</comment>
<comment type="similarity">
    <text evidence="1">Belongs to the AP endonuclease 2 family.</text>
</comment>
<gene>
    <name evidence="1" type="primary">nfo</name>
    <name type="ordered locus">Ppha_2282</name>
</gene>
<evidence type="ECO:0000255" key="1">
    <source>
        <dbReference type="HAMAP-Rule" id="MF_00152"/>
    </source>
</evidence>